<dbReference type="EC" id="6.1.1.20" evidence="1"/>
<dbReference type="EMBL" id="AE015924">
    <property type="protein sequence ID" value="AAQ65345.1"/>
    <property type="molecule type" value="Genomic_DNA"/>
</dbReference>
<dbReference type="RefSeq" id="WP_005873967.1">
    <property type="nucleotide sequence ID" value="NC_002950.2"/>
</dbReference>
<dbReference type="PDB" id="3ICA">
    <property type="method" value="X-ray"/>
    <property type="resolution" value="2.44 A"/>
    <property type="chains" value="A/B=503-712"/>
</dbReference>
<dbReference type="PDBsum" id="3ICA"/>
<dbReference type="SMR" id="Q7MXR4"/>
<dbReference type="STRING" id="242619.PG_0099"/>
<dbReference type="DNASU" id="2551863"/>
<dbReference type="EnsemblBacteria" id="AAQ65345">
    <property type="protein sequence ID" value="AAQ65345"/>
    <property type="gene ID" value="PG_0099"/>
</dbReference>
<dbReference type="KEGG" id="pgi:PG_0099"/>
<dbReference type="PATRIC" id="fig|242619.8.peg.90"/>
<dbReference type="eggNOG" id="COG0072">
    <property type="taxonomic scope" value="Bacteria"/>
</dbReference>
<dbReference type="eggNOG" id="COG0073">
    <property type="taxonomic scope" value="Bacteria"/>
</dbReference>
<dbReference type="HOGENOM" id="CLU_016891_0_0_10"/>
<dbReference type="BioCyc" id="PGIN242619:G1G02-90-MONOMER"/>
<dbReference type="EvolutionaryTrace" id="Q7MXR4"/>
<dbReference type="Proteomes" id="UP000000588">
    <property type="component" value="Chromosome"/>
</dbReference>
<dbReference type="GO" id="GO:0009328">
    <property type="term" value="C:phenylalanine-tRNA ligase complex"/>
    <property type="evidence" value="ECO:0007669"/>
    <property type="project" value="TreeGrafter"/>
</dbReference>
<dbReference type="GO" id="GO:0005524">
    <property type="term" value="F:ATP binding"/>
    <property type="evidence" value="ECO:0007669"/>
    <property type="project" value="UniProtKB-UniRule"/>
</dbReference>
<dbReference type="GO" id="GO:0000287">
    <property type="term" value="F:magnesium ion binding"/>
    <property type="evidence" value="ECO:0007669"/>
    <property type="project" value="UniProtKB-UniRule"/>
</dbReference>
<dbReference type="GO" id="GO:0004826">
    <property type="term" value="F:phenylalanine-tRNA ligase activity"/>
    <property type="evidence" value="ECO:0007669"/>
    <property type="project" value="UniProtKB-UniRule"/>
</dbReference>
<dbReference type="GO" id="GO:0000049">
    <property type="term" value="F:tRNA binding"/>
    <property type="evidence" value="ECO:0007669"/>
    <property type="project" value="UniProtKB-KW"/>
</dbReference>
<dbReference type="GO" id="GO:0006432">
    <property type="term" value="P:phenylalanyl-tRNA aminoacylation"/>
    <property type="evidence" value="ECO:0007669"/>
    <property type="project" value="UniProtKB-UniRule"/>
</dbReference>
<dbReference type="CDD" id="cd00769">
    <property type="entry name" value="PheRS_beta_core"/>
    <property type="match status" value="1"/>
</dbReference>
<dbReference type="CDD" id="cd02796">
    <property type="entry name" value="tRNA_bind_bactPheRS"/>
    <property type="match status" value="1"/>
</dbReference>
<dbReference type="FunFam" id="2.40.50.140:FF:000045">
    <property type="entry name" value="Phenylalanine--tRNA ligase beta subunit"/>
    <property type="match status" value="1"/>
</dbReference>
<dbReference type="FunFam" id="3.30.70.380:FF:000001">
    <property type="entry name" value="Phenylalanine--tRNA ligase beta subunit"/>
    <property type="match status" value="1"/>
</dbReference>
<dbReference type="FunFam" id="3.50.40.10:FF:000001">
    <property type="entry name" value="Phenylalanine--tRNA ligase beta subunit"/>
    <property type="match status" value="1"/>
</dbReference>
<dbReference type="Gene3D" id="3.30.56.10">
    <property type="match status" value="2"/>
</dbReference>
<dbReference type="Gene3D" id="3.30.930.10">
    <property type="entry name" value="Bira Bifunctional Protein, Domain 2"/>
    <property type="match status" value="1"/>
</dbReference>
<dbReference type="Gene3D" id="3.30.70.380">
    <property type="entry name" value="Ferrodoxin-fold anticodon-binding domain"/>
    <property type="match status" value="1"/>
</dbReference>
<dbReference type="Gene3D" id="2.40.50.140">
    <property type="entry name" value="Nucleic acid-binding proteins"/>
    <property type="match status" value="1"/>
</dbReference>
<dbReference type="Gene3D" id="3.50.40.10">
    <property type="entry name" value="Phenylalanyl-trna Synthetase, Chain B, domain 3"/>
    <property type="match status" value="1"/>
</dbReference>
<dbReference type="HAMAP" id="MF_00283">
    <property type="entry name" value="Phe_tRNA_synth_beta1"/>
    <property type="match status" value="1"/>
</dbReference>
<dbReference type="InterPro" id="IPR045864">
    <property type="entry name" value="aa-tRNA-synth_II/BPL/LPL"/>
</dbReference>
<dbReference type="InterPro" id="IPR005146">
    <property type="entry name" value="B3/B4_tRNA-bd"/>
</dbReference>
<dbReference type="InterPro" id="IPR009061">
    <property type="entry name" value="DNA-bd_dom_put_sf"/>
</dbReference>
<dbReference type="InterPro" id="IPR005121">
    <property type="entry name" value="Fdx_antiC-bd"/>
</dbReference>
<dbReference type="InterPro" id="IPR036690">
    <property type="entry name" value="Fdx_antiC-bd_sf"/>
</dbReference>
<dbReference type="InterPro" id="IPR012340">
    <property type="entry name" value="NA-bd_OB-fold"/>
</dbReference>
<dbReference type="InterPro" id="IPR045060">
    <property type="entry name" value="Phe-tRNA-ligase_IIc_bsu"/>
</dbReference>
<dbReference type="InterPro" id="IPR004532">
    <property type="entry name" value="Phe-tRNA-ligase_IIc_bsu_bact"/>
</dbReference>
<dbReference type="InterPro" id="IPR020825">
    <property type="entry name" value="Phe-tRNA_synthase-like_B3/B4"/>
</dbReference>
<dbReference type="InterPro" id="IPR041616">
    <property type="entry name" value="PheRS_beta_core"/>
</dbReference>
<dbReference type="InterPro" id="IPR002547">
    <property type="entry name" value="tRNA-bd_dom"/>
</dbReference>
<dbReference type="InterPro" id="IPR033714">
    <property type="entry name" value="tRNA_bind_bactPheRS"/>
</dbReference>
<dbReference type="InterPro" id="IPR005147">
    <property type="entry name" value="tRNA_synthase_B5-dom"/>
</dbReference>
<dbReference type="NCBIfam" id="TIGR00472">
    <property type="entry name" value="pheT_bact"/>
    <property type="match status" value="1"/>
</dbReference>
<dbReference type="NCBIfam" id="NF045760">
    <property type="entry name" value="YtpR"/>
    <property type="match status" value="1"/>
</dbReference>
<dbReference type="PANTHER" id="PTHR10947:SF0">
    <property type="entry name" value="PHENYLALANINE--TRNA LIGASE BETA SUBUNIT"/>
    <property type="match status" value="1"/>
</dbReference>
<dbReference type="PANTHER" id="PTHR10947">
    <property type="entry name" value="PHENYLALANYL-TRNA SYNTHETASE BETA CHAIN AND LEUCINE-RICH REPEAT-CONTAINING PROTEIN 47"/>
    <property type="match status" value="1"/>
</dbReference>
<dbReference type="Pfam" id="PF03483">
    <property type="entry name" value="B3_4"/>
    <property type="match status" value="1"/>
</dbReference>
<dbReference type="Pfam" id="PF03484">
    <property type="entry name" value="B5"/>
    <property type="match status" value="1"/>
</dbReference>
<dbReference type="Pfam" id="PF03147">
    <property type="entry name" value="FDX-ACB"/>
    <property type="match status" value="1"/>
</dbReference>
<dbReference type="Pfam" id="PF01588">
    <property type="entry name" value="tRNA_bind"/>
    <property type="match status" value="1"/>
</dbReference>
<dbReference type="Pfam" id="PF17759">
    <property type="entry name" value="tRNA_synthFbeta"/>
    <property type="match status" value="1"/>
</dbReference>
<dbReference type="SMART" id="SM00873">
    <property type="entry name" value="B3_4"/>
    <property type="match status" value="1"/>
</dbReference>
<dbReference type="SMART" id="SM00874">
    <property type="entry name" value="B5"/>
    <property type="match status" value="1"/>
</dbReference>
<dbReference type="SMART" id="SM00896">
    <property type="entry name" value="FDX-ACB"/>
    <property type="match status" value="1"/>
</dbReference>
<dbReference type="SUPFAM" id="SSF54991">
    <property type="entry name" value="Anticodon-binding domain of PheRS"/>
    <property type="match status" value="1"/>
</dbReference>
<dbReference type="SUPFAM" id="SSF55681">
    <property type="entry name" value="Class II aaRS and biotin synthetases"/>
    <property type="match status" value="1"/>
</dbReference>
<dbReference type="SUPFAM" id="SSF50249">
    <property type="entry name" value="Nucleic acid-binding proteins"/>
    <property type="match status" value="1"/>
</dbReference>
<dbReference type="SUPFAM" id="SSF56037">
    <property type="entry name" value="PheT/TilS domain"/>
    <property type="match status" value="1"/>
</dbReference>
<dbReference type="SUPFAM" id="SSF46955">
    <property type="entry name" value="Putative DNA-binding domain"/>
    <property type="match status" value="1"/>
</dbReference>
<dbReference type="PROSITE" id="PS51483">
    <property type="entry name" value="B5"/>
    <property type="match status" value="1"/>
</dbReference>
<dbReference type="PROSITE" id="PS51447">
    <property type="entry name" value="FDX_ACB"/>
    <property type="match status" value="1"/>
</dbReference>
<dbReference type="PROSITE" id="PS50886">
    <property type="entry name" value="TRBD"/>
    <property type="match status" value="1"/>
</dbReference>
<organism>
    <name type="scientific">Porphyromonas gingivalis (strain ATCC BAA-308 / W83)</name>
    <dbReference type="NCBI Taxonomy" id="242619"/>
    <lineage>
        <taxon>Bacteria</taxon>
        <taxon>Pseudomonadati</taxon>
        <taxon>Bacteroidota</taxon>
        <taxon>Bacteroidia</taxon>
        <taxon>Bacteroidales</taxon>
        <taxon>Porphyromonadaceae</taxon>
        <taxon>Porphyromonas</taxon>
    </lineage>
</organism>
<gene>
    <name evidence="1" type="primary">pheT</name>
    <name type="ordered locus">PG_0099</name>
</gene>
<comment type="catalytic activity">
    <reaction evidence="1">
        <text>tRNA(Phe) + L-phenylalanine + ATP = L-phenylalanyl-tRNA(Phe) + AMP + diphosphate + H(+)</text>
        <dbReference type="Rhea" id="RHEA:19413"/>
        <dbReference type="Rhea" id="RHEA-COMP:9668"/>
        <dbReference type="Rhea" id="RHEA-COMP:9699"/>
        <dbReference type="ChEBI" id="CHEBI:15378"/>
        <dbReference type="ChEBI" id="CHEBI:30616"/>
        <dbReference type="ChEBI" id="CHEBI:33019"/>
        <dbReference type="ChEBI" id="CHEBI:58095"/>
        <dbReference type="ChEBI" id="CHEBI:78442"/>
        <dbReference type="ChEBI" id="CHEBI:78531"/>
        <dbReference type="ChEBI" id="CHEBI:456215"/>
        <dbReference type="EC" id="6.1.1.20"/>
    </reaction>
</comment>
<comment type="cofactor">
    <cofactor evidence="1">
        <name>Mg(2+)</name>
        <dbReference type="ChEBI" id="CHEBI:18420"/>
    </cofactor>
    <text evidence="1">Binds 2 magnesium ions per tetramer.</text>
</comment>
<comment type="subunit">
    <text evidence="1">Tetramer of two alpha and two beta subunits.</text>
</comment>
<comment type="subcellular location">
    <subcellularLocation>
        <location evidence="1">Cytoplasm</location>
    </subcellularLocation>
</comment>
<comment type="similarity">
    <text evidence="1">Belongs to the phenylalanyl-tRNA synthetase beta subunit family. Type 1 subfamily.</text>
</comment>
<sequence length="819" mass="91271">MNISYKWLLEYLPCTLSPQEIADTLTSIGLETGGVEEIETIRGGLRGLVIGHVLTCEEHPNSDHLHITTVDVGADAPLQIVCGAPNVAAGQKVVVATVGTTLYHGEEEFAIKKSKIRGVESFGMICSEVEIGVGSSNDGTIVLPSDAPVGMPAAEYYHVESDYCIEVDITPNRVDATSHYGVARDLAASLKRNGVPAELKLPEVNLPTDIIDSRIEVKVADATACPRYQGLVIRDITVGESPEWLRNRLQAIGLRPINNIVDITNYVLHEFGQPLHAFDLAFIKGDRVHVQTVAEGTPFVTLDGVERKLTAEDLMICDSNGDPMCVAGVFGGLHSGVTEKTTDIFLESANFNPTMVRRTARRLGLNTDSSFRFERGLDPERTDWALRRAASLILEIAGGHLGGMTDVYSNPLKPHLISLSFEKVNSVIGRTIEPEMVRSILNSLEIRISKEEDGVMTLEVPRYRTDVTRDVDVIEEIMRIYGYNQVELTGYIRASLGHETETDRRYKWQTVVSEQLVGAGFNEILNNSLTAGSYYEGLKSHPREMAVELMNPLSQELNCMRQTLLFGGLETLSHNLRRKHLSLYLFEWGKCYRFHAAKRTDETPLAAYAEDDRLGIWICGQRVHNSWAHPEEPTSVFELKAVVEQVLCRVGIETGAYTLKTADNDLYASAMEVKTRSGKLLGTFGTVSTELIKRFEIEQPVYFAELLWDALMSESARYKLEARDLPRFPEVKRDLALLLDKAVSFAEIESLARGCEKKLLRRVELFDVYEGKNLPAGKKSYAVSFFLRNDEKTLNDKQIEAIMAKIRTTLEQKLGAQLR</sequence>
<accession>Q7MXR4</accession>
<proteinExistence type="evidence at protein level"/>
<evidence type="ECO:0000255" key="1">
    <source>
        <dbReference type="HAMAP-Rule" id="MF_00283"/>
    </source>
</evidence>
<evidence type="ECO:0007829" key="2">
    <source>
        <dbReference type="PDB" id="3ICA"/>
    </source>
</evidence>
<keyword id="KW-0002">3D-structure</keyword>
<keyword id="KW-0030">Aminoacyl-tRNA synthetase</keyword>
<keyword id="KW-0067">ATP-binding</keyword>
<keyword id="KW-0963">Cytoplasm</keyword>
<keyword id="KW-0436">Ligase</keyword>
<keyword id="KW-0460">Magnesium</keyword>
<keyword id="KW-0479">Metal-binding</keyword>
<keyword id="KW-0547">Nucleotide-binding</keyword>
<keyword id="KW-0648">Protein biosynthesis</keyword>
<keyword id="KW-1185">Reference proteome</keyword>
<keyword id="KW-0694">RNA-binding</keyword>
<keyword id="KW-0820">tRNA-binding</keyword>
<reference key="1">
    <citation type="journal article" date="2003" name="J. Bacteriol.">
        <title>Complete genome sequence of the oral pathogenic bacterium Porphyromonas gingivalis strain W83.</title>
        <authorList>
            <person name="Nelson K.E."/>
            <person name="Fleischmann R.D."/>
            <person name="DeBoy R.T."/>
            <person name="Paulsen I.T."/>
            <person name="Fouts D.E."/>
            <person name="Eisen J.A."/>
            <person name="Daugherty S.C."/>
            <person name="Dodson R.J."/>
            <person name="Durkin A.S."/>
            <person name="Gwinn M.L."/>
            <person name="Haft D.H."/>
            <person name="Kolonay J.F."/>
            <person name="Nelson W.C."/>
            <person name="Mason T.M."/>
            <person name="Tallon L."/>
            <person name="Gray J."/>
            <person name="Granger D."/>
            <person name="Tettelin H."/>
            <person name="Dong H."/>
            <person name="Galvin J.L."/>
            <person name="Duncan M.J."/>
            <person name="Dewhirst F.E."/>
            <person name="Fraser C.M."/>
        </authorList>
    </citation>
    <scope>NUCLEOTIDE SEQUENCE [LARGE SCALE GENOMIC DNA]</scope>
    <source>
        <strain>ATCC BAA-308 / W83</strain>
    </source>
</reference>
<feature type="chain" id="PRO_0000126927" description="Phenylalanine--tRNA ligase beta subunit">
    <location>
        <begin position="1"/>
        <end position="819"/>
    </location>
</feature>
<feature type="domain" description="tRNA-binding" evidence="1">
    <location>
        <begin position="42"/>
        <end position="154"/>
    </location>
</feature>
<feature type="domain" description="B5" evidence="1">
    <location>
        <begin position="412"/>
        <end position="488"/>
    </location>
</feature>
<feature type="domain" description="FDX-ACB" evidence="1">
    <location>
        <begin position="726"/>
        <end position="819"/>
    </location>
</feature>
<feature type="binding site" evidence="1">
    <location>
        <position position="466"/>
    </location>
    <ligand>
        <name>Mg(2+)</name>
        <dbReference type="ChEBI" id="CHEBI:18420"/>
        <note>shared with alpha subunit</note>
    </ligand>
</feature>
<feature type="binding site" evidence="1">
    <location>
        <position position="472"/>
    </location>
    <ligand>
        <name>Mg(2+)</name>
        <dbReference type="ChEBI" id="CHEBI:18420"/>
        <note>shared with alpha subunit</note>
    </ligand>
</feature>
<feature type="binding site" evidence="1">
    <location>
        <position position="475"/>
    </location>
    <ligand>
        <name>Mg(2+)</name>
        <dbReference type="ChEBI" id="CHEBI:18420"/>
        <note>shared with alpha subunit</note>
    </ligand>
</feature>
<feature type="binding site" evidence="1">
    <location>
        <position position="476"/>
    </location>
    <ligand>
        <name>Mg(2+)</name>
        <dbReference type="ChEBI" id="CHEBI:18420"/>
        <note>shared with alpha subunit</note>
    </ligand>
</feature>
<feature type="helix" evidence="2">
    <location>
        <begin position="503"/>
        <end position="518"/>
    </location>
</feature>
<feature type="strand" evidence="2">
    <location>
        <begin position="528"/>
        <end position="531"/>
    </location>
</feature>
<feature type="helix" evidence="2">
    <location>
        <begin position="532"/>
        <end position="535"/>
    </location>
</feature>
<feature type="strand" evidence="2">
    <location>
        <begin position="539"/>
        <end position="541"/>
    </location>
</feature>
<feature type="helix" evidence="2">
    <location>
        <begin position="543"/>
        <end position="545"/>
    </location>
</feature>
<feature type="strand" evidence="2">
    <location>
        <begin position="550"/>
        <end position="553"/>
    </location>
</feature>
<feature type="strand" evidence="2">
    <location>
        <begin position="555"/>
        <end position="560"/>
    </location>
</feature>
<feature type="strand" evidence="2">
    <location>
        <begin position="562"/>
        <end position="564"/>
    </location>
</feature>
<feature type="helix" evidence="2">
    <location>
        <begin position="565"/>
        <end position="576"/>
    </location>
</feature>
<feature type="turn" evidence="2">
    <location>
        <begin position="577"/>
        <end position="579"/>
    </location>
</feature>
<feature type="strand" evidence="2">
    <location>
        <begin position="581"/>
        <end position="595"/>
    </location>
</feature>
<feature type="strand" evidence="2">
    <location>
        <begin position="607"/>
        <end position="621"/>
    </location>
</feature>
<feature type="helix" evidence="2">
    <location>
        <begin position="636"/>
        <end position="649"/>
    </location>
</feature>
<feature type="helix" evidence="2">
    <location>
        <begin position="654"/>
        <end position="656"/>
    </location>
</feature>
<feature type="strand" evidence="2">
    <location>
        <begin position="657"/>
        <end position="661"/>
    </location>
</feature>
<feature type="strand" evidence="2">
    <location>
        <begin position="667"/>
        <end position="675"/>
    </location>
</feature>
<feature type="strand" evidence="2">
    <location>
        <begin position="680"/>
        <end position="687"/>
    </location>
</feature>
<feature type="helix" evidence="2">
    <location>
        <begin position="689"/>
        <end position="694"/>
    </location>
</feature>
<feature type="strand" evidence="2">
    <location>
        <begin position="701"/>
        <end position="707"/>
    </location>
</feature>
<feature type="helix" evidence="2">
    <location>
        <begin position="708"/>
        <end position="711"/>
    </location>
</feature>
<name>SYFB_PORGI</name>
<protein>
    <recommendedName>
        <fullName evidence="1">Phenylalanine--tRNA ligase beta subunit</fullName>
        <ecNumber evidence="1">6.1.1.20</ecNumber>
    </recommendedName>
    <alternativeName>
        <fullName evidence="1">Phenylalanyl-tRNA synthetase beta subunit</fullName>
        <shortName evidence="1">PheRS</shortName>
    </alternativeName>
</protein>